<name>DIUH1_TENMO</name>
<evidence type="ECO:0000269" key="1">
    <source>
    </source>
</evidence>
<evidence type="ECO:0000305" key="2"/>
<dbReference type="PIR" id="A58607">
    <property type="entry name" value="A57127"/>
</dbReference>
<dbReference type="SMR" id="P56618"/>
<dbReference type="GO" id="GO:0005576">
    <property type="term" value="C:extracellular region"/>
    <property type="evidence" value="ECO:0007669"/>
    <property type="project" value="UniProtKB-SubCell"/>
</dbReference>
<dbReference type="GO" id="GO:0005179">
    <property type="term" value="F:hormone activity"/>
    <property type="evidence" value="ECO:0007669"/>
    <property type="project" value="UniProtKB-KW"/>
</dbReference>
<dbReference type="InterPro" id="IPR018446">
    <property type="entry name" value="Corticotropin-releasing_fac_CS"/>
</dbReference>
<dbReference type="InterPro" id="IPR000187">
    <property type="entry name" value="CRF"/>
</dbReference>
<dbReference type="Pfam" id="PF00473">
    <property type="entry name" value="CRF"/>
    <property type="match status" value="1"/>
</dbReference>
<dbReference type="PROSITE" id="PS00511">
    <property type="entry name" value="CRF"/>
    <property type="match status" value="1"/>
</dbReference>
<sequence length="37" mass="4371">SPTISITAPIDVLRKTWEQERARKQMVKNREFLNSLN</sequence>
<accession>P56618</accession>
<reference key="1">
    <citation type="journal article" date="1995" name="Proc. Natl. Acad. Sci. U.S.A.">
        <title>Isolation and identification of a diuretic hormone from the mealworm Tenebrio molitor.</title>
        <authorList>
            <person name="Furuya K."/>
            <person name="Schegg K.M."/>
            <person name="Wang H."/>
            <person name="King D.S."/>
            <person name="Schooley D.A."/>
        </authorList>
    </citation>
    <scope>PROTEIN SEQUENCE</scope>
    <source>
        <tissue>Head</tissue>
    </source>
</reference>
<reference key="2">
    <citation type="journal article" date="2002" name="J. Exp. Biol.">
        <title>Antagonistic control of fluid secretion by the Malpighian tubules of Tenebrio molitor: effects of diuretic and antidiuretic peptides and their second messengers.</title>
        <authorList>
            <person name="Wiehart U.I.M."/>
            <person name="Nicolson S.W."/>
            <person name="Eigenheer R.A."/>
            <person name="Schooley D.A."/>
        </authorList>
    </citation>
    <scope>FUNCTION</scope>
</reference>
<comment type="function">
    <text evidence="1">Stimulates fluid secretion by the Malpighian tubules. Increases cyclic AMP production.</text>
</comment>
<comment type="subcellular location">
    <subcellularLocation>
        <location>Secreted</location>
    </subcellularLocation>
</comment>
<comment type="miscellaneous">
    <text>Inhibited by antidiuretic factor A.</text>
</comment>
<comment type="similarity">
    <text evidence="2">Belongs to the sauvagine/corticotropin-releasing factor/urotensin I family.</text>
</comment>
<proteinExistence type="evidence at protein level"/>
<protein>
    <recommendedName>
        <fullName>Diuretic hormone 1</fullName>
    </recommendedName>
    <alternativeName>
        <fullName>DH(37)</fullName>
        <shortName>DH37</shortName>
    </alternativeName>
    <alternativeName>
        <fullName>Diuretic hormone I</fullName>
        <shortName>DH I</shortName>
    </alternativeName>
    <alternativeName>
        <fullName>Diuretic peptide I</fullName>
        <shortName>DP I</shortName>
    </alternativeName>
</protein>
<feature type="peptide" id="PRO_0000044692" description="Diuretic hormone 1">
    <location>
        <begin position="1"/>
        <end position="37"/>
    </location>
</feature>
<organism>
    <name type="scientific">Tenebrio molitor</name>
    <name type="common">Yellow mealworm beetle</name>
    <dbReference type="NCBI Taxonomy" id="7067"/>
    <lineage>
        <taxon>Eukaryota</taxon>
        <taxon>Metazoa</taxon>
        <taxon>Ecdysozoa</taxon>
        <taxon>Arthropoda</taxon>
        <taxon>Hexapoda</taxon>
        <taxon>Insecta</taxon>
        <taxon>Pterygota</taxon>
        <taxon>Neoptera</taxon>
        <taxon>Endopterygota</taxon>
        <taxon>Coleoptera</taxon>
        <taxon>Polyphaga</taxon>
        <taxon>Cucujiformia</taxon>
        <taxon>Tenebrionidae</taxon>
        <taxon>Tenebrio</taxon>
    </lineage>
</organism>
<keyword id="KW-0903">Direct protein sequencing</keyword>
<keyword id="KW-0372">Hormone</keyword>
<keyword id="KW-0964">Secreted</keyword>